<comment type="function">
    <text evidence="1">Bifunctional serine/threonine kinase and phosphorylase involved in the regulation of the pyruvate, phosphate dikinase (PPDK) by catalyzing its phosphorylation/dephosphorylation.</text>
</comment>
<comment type="catalytic activity">
    <reaction evidence="1">
        <text>N(tele)-phospho-L-histidyl/L-threonyl-[pyruvate, phosphate dikinase] + ADP = N(tele)-phospho-L-histidyl/O-phospho-L-threonyl-[pyruvate, phosphate dikinase] + AMP + H(+)</text>
        <dbReference type="Rhea" id="RHEA:43692"/>
        <dbReference type="Rhea" id="RHEA-COMP:10650"/>
        <dbReference type="Rhea" id="RHEA-COMP:10651"/>
        <dbReference type="ChEBI" id="CHEBI:15378"/>
        <dbReference type="ChEBI" id="CHEBI:30013"/>
        <dbReference type="ChEBI" id="CHEBI:61977"/>
        <dbReference type="ChEBI" id="CHEBI:83586"/>
        <dbReference type="ChEBI" id="CHEBI:456215"/>
        <dbReference type="ChEBI" id="CHEBI:456216"/>
        <dbReference type="EC" id="2.7.11.32"/>
    </reaction>
</comment>
<comment type="catalytic activity">
    <reaction evidence="1">
        <text>N(tele)-phospho-L-histidyl/O-phospho-L-threonyl-[pyruvate, phosphate dikinase] + phosphate + H(+) = N(tele)-phospho-L-histidyl/L-threonyl-[pyruvate, phosphate dikinase] + diphosphate</text>
        <dbReference type="Rhea" id="RHEA:43696"/>
        <dbReference type="Rhea" id="RHEA-COMP:10650"/>
        <dbReference type="Rhea" id="RHEA-COMP:10651"/>
        <dbReference type="ChEBI" id="CHEBI:15378"/>
        <dbReference type="ChEBI" id="CHEBI:30013"/>
        <dbReference type="ChEBI" id="CHEBI:33019"/>
        <dbReference type="ChEBI" id="CHEBI:43474"/>
        <dbReference type="ChEBI" id="CHEBI:61977"/>
        <dbReference type="ChEBI" id="CHEBI:83586"/>
        <dbReference type="EC" id="2.7.4.27"/>
    </reaction>
</comment>
<comment type="similarity">
    <text evidence="1">Belongs to the pyruvate, phosphate/water dikinase regulatory protein family. PDRP subfamily.</text>
</comment>
<accession>C0RFV5</accession>
<proteinExistence type="inferred from homology"/>
<organism>
    <name type="scientific">Brucella melitensis biotype 2 (strain ATCC 23457)</name>
    <dbReference type="NCBI Taxonomy" id="546272"/>
    <lineage>
        <taxon>Bacteria</taxon>
        <taxon>Pseudomonadati</taxon>
        <taxon>Pseudomonadota</taxon>
        <taxon>Alphaproteobacteria</taxon>
        <taxon>Hyphomicrobiales</taxon>
        <taxon>Brucellaceae</taxon>
        <taxon>Brucella/Ochrobactrum group</taxon>
        <taxon>Brucella</taxon>
    </lineage>
</organism>
<sequence length="279" mass="30481">MTRPLSYFHLHLISDATGETLLAAGRAAAAQYANARAIEHIYPLIRTEKQLRKVLEGIDAEPGIVLYTVVDQKLAAIIDESCADMGVPSVSVLEPVLNTFQSYLGAPAHRRASAQHVLNADYFRRIDALNFMMEHDDGQLPLDIEEADVIIVGISRTSKTPTSIYLANRGIKAANVPLVLGIPVPEILFAAKRPLIVGLVATAERISQIRQNRPIGNIPSLDTGLYTDRVSISEELAYARNLCNRHGWPIIDVSRRSIEETAAAILALLRNGKKEGSSS</sequence>
<name>PDRP_BRUMB</name>
<gene>
    <name type="ordered locus">BMEA_A2129</name>
</gene>
<feature type="chain" id="PRO_1000149701" description="Putative pyruvate, phosphate dikinase regulatory protein">
    <location>
        <begin position="1"/>
        <end position="279"/>
    </location>
</feature>
<feature type="binding site" evidence="1">
    <location>
        <begin position="153"/>
        <end position="160"/>
    </location>
    <ligand>
        <name>ADP</name>
        <dbReference type="ChEBI" id="CHEBI:456216"/>
    </ligand>
</feature>
<dbReference type="EC" id="2.7.11.32" evidence="1"/>
<dbReference type="EC" id="2.7.4.27" evidence="1"/>
<dbReference type="EMBL" id="CP001488">
    <property type="protein sequence ID" value="ACO01777.1"/>
    <property type="molecule type" value="Genomic_DNA"/>
</dbReference>
<dbReference type="RefSeq" id="WP_004686215.1">
    <property type="nucleotide sequence ID" value="NC_012441.1"/>
</dbReference>
<dbReference type="SMR" id="C0RFV5"/>
<dbReference type="KEGG" id="bmi:BMEA_A2129"/>
<dbReference type="HOGENOM" id="CLU_046206_2_0_5"/>
<dbReference type="Proteomes" id="UP000001748">
    <property type="component" value="Chromosome I"/>
</dbReference>
<dbReference type="GO" id="GO:0043531">
    <property type="term" value="F:ADP binding"/>
    <property type="evidence" value="ECO:0007669"/>
    <property type="project" value="UniProtKB-UniRule"/>
</dbReference>
<dbReference type="GO" id="GO:0005524">
    <property type="term" value="F:ATP binding"/>
    <property type="evidence" value="ECO:0007669"/>
    <property type="project" value="InterPro"/>
</dbReference>
<dbReference type="GO" id="GO:0016776">
    <property type="term" value="F:phosphotransferase activity, phosphate group as acceptor"/>
    <property type="evidence" value="ECO:0007669"/>
    <property type="project" value="UniProtKB-UniRule"/>
</dbReference>
<dbReference type="GO" id="GO:0004674">
    <property type="term" value="F:protein serine/threonine kinase activity"/>
    <property type="evidence" value="ECO:0007669"/>
    <property type="project" value="UniProtKB-UniRule"/>
</dbReference>
<dbReference type="HAMAP" id="MF_00921">
    <property type="entry name" value="PDRP"/>
    <property type="match status" value="1"/>
</dbReference>
<dbReference type="InterPro" id="IPR005177">
    <property type="entry name" value="Kinase-pyrophosphorylase"/>
</dbReference>
<dbReference type="InterPro" id="IPR026565">
    <property type="entry name" value="PPDK_reg"/>
</dbReference>
<dbReference type="NCBIfam" id="NF003742">
    <property type="entry name" value="PRK05339.1"/>
    <property type="match status" value="1"/>
</dbReference>
<dbReference type="PANTHER" id="PTHR31756">
    <property type="entry name" value="PYRUVATE, PHOSPHATE DIKINASE REGULATORY PROTEIN 1, CHLOROPLASTIC"/>
    <property type="match status" value="1"/>
</dbReference>
<dbReference type="PANTHER" id="PTHR31756:SF3">
    <property type="entry name" value="PYRUVATE, PHOSPHATE DIKINASE REGULATORY PROTEIN 1, CHLOROPLASTIC"/>
    <property type="match status" value="1"/>
</dbReference>
<dbReference type="Pfam" id="PF03618">
    <property type="entry name" value="Kinase-PPPase"/>
    <property type="match status" value="1"/>
</dbReference>
<keyword id="KW-0418">Kinase</keyword>
<keyword id="KW-0547">Nucleotide-binding</keyword>
<keyword id="KW-0723">Serine/threonine-protein kinase</keyword>
<keyword id="KW-0808">Transferase</keyword>
<evidence type="ECO:0000255" key="1">
    <source>
        <dbReference type="HAMAP-Rule" id="MF_00921"/>
    </source>
</evidence>
<protein>
    <recommendedName>
        <fullName evidence="1">Putative pyruvate, phosphate dikinase regulatory protein</fullName>
        <shortName evidence="1">PPDK regulatory protein</shortName>
        <ecNumber evidence="1">2.7.11.32</ecNumber>
        <ecNumber evidence="1">2.7.4.27</ecNumber>
    </recommendedName>
</protein>
<reference key="1">
    <citation type="submission" date="2009-03" db="EMBL/GenBank/DDBJ databases">
        <title>Brucella melitensis ATCC 23457 whole genome shotgun sequencing project.</title>
        <authorList>
            <person name="Setubal J.C."/>
            <person name="Boyle S."/>
            <person name="Crasta O.R."/>
            <person name="Gillespie J.J."/>
            <person name="Kenyon R.W."/>
            <person name="Lu J."/>
            <person name="Mane S."/>
            <person name="Nagrani S."/>
            <person name="Shallom J.M."/>
            <person name="Shallom S."/>
            <person name="Shukla M."/>
            <person name="Snyder E.E."/>
            <person name="Sobral B.W."/>
            <person name="Wattam A.R."/>
            <person name="Will R."/>
            <person name="Williams K."/>
            <person name="Yoo H."/>
            <person name="Munk C."/>
            <person name="Tapia R."/>
            <person name="Han C."/>
            <person name="Detter J.C."/>
            <person name="Bruce D."/>
            <person name="Brettin T.S."/>
        </authorList>
    </citation>
    <scope>NUCLEOTIDE SEQUENCE [LARGE SCALE GENOMIC DNA]</scope>
    <source>
        <strain>ATCC 23457</strain>
    </source>
</reference>